<protein>
    <recommendedName>
        <fullName evidence="14">Protein male-specific lethal-1</fullName>
    </recommendedName>
</protein>
<name>MSL1_DROME</name>
<proteinExistence type="evidence at protein level"/>
<dbReference type="EMBL" id="L42514">
    <property type="protein sequence ID" value="AAA98918.1"/>
    <property type="molecule type" value="Genomic_DNA"/>
</dbReference>
<dbReference type="EMBL" id="AE014134">
    <property type="protein sequence ID" value="AAF53689.1"/>
    <property type="molecule type" value="Genomic_DNA"/>
</dbReference>
<dbReference type="EMBL" id="BT023828">
    <property type="protein sequence ID" value="AAZ86749.1"/>
    <property type="molecule type" value="mRNA"/>
</dbReference>
<dbReference type="PIR" id="S52959">
    <property type="entry name" value="S52959"/>
</dbReference>
<dbReference type="RefSeq" id="NP_001286054.1">
    <property type="nucleotide sequence ID" value="NM_001299125.1"/>
</dbReference>
<dbReference type="RefSeq" id="NP_476896.1">
    <property type="nucleotide sequence ID" value="NM_057548.4"/>
</dbReference>
<dbReference type="SMR" id="P50535"/>
<dbReference type="BioGRID" id="61115">
    <property type="interactions" value="22"/>
</dbReference>
<dbReference type="ComplexPortal" id="CPX-2340">
    <property type="entry name" value="Male specific lethal complex"/>
</dbReference>
<dbReference type="DIP" id="DIP-18144N"/>
<dbReference type="FunCoup" id="P50535">
    <property type="interactions" value="287"/>
</dbReference>
<dbReference type="IntAct" id="P50535">
    <property type="interactions" value="7"/>
</dbReference>
<dbReference type="STRING" id="7227.FBpp0080674"/>
<dbReference type="GlyGen" id="P50535">
    <property type="glycosylation" value="3 sites"/>
</dbReference>
<dbReference type="PaxDb" id="7227-FBpp0080674"/>
<dbReference type="DNASU" id="35121"/>
<dbReference type="EnsemblMetazoa" id="FBtr0081130">
    <property type="protein sequence ID" value="FBpp0080674"/>
    <property type="gene ID" value="FBgn0005617"/>
</dbReference>
<dbReference type="EnsemblMetazoa" id="FBtr0343118">
    <property type="protein sequence ID" value="FBpp0309817"/>
    <property type="gene ID" value="FBgn0005617"/>
</dbReference>
<dbReference type="GeneID" id="35121"/>
<dbReference type="KEGG" id="dme:Dmel_CG10385"/>
<dbReference type="AGR" id="FB:FBgn0005617"/>
<dbReference type="CTD" id="35121"/>
<dbReference type="FlyBase" id="FBgn0005617">
    <property type="gene designation" value="msl-1"/>
</dbReference>
<dbReference type="VEuPathDB" id="VectorBase:FBgn0005617"/>
<dbReference type="eggNOG" id="ENOG502QQ0S">
    <property type="taxonomic scope" value="Eukaryota"/>
</dbReference>
<dbReference type="HOGENOM" id="CLU_002440_0_0_1"/>
<dbReference type="InParanoid" id="P50535"/>
<dbReference type="OMA" id="HHNPSRG"/>
<dbReference type="OrthoDB" id="6022555at2759"/>
<dbReference type="PhylomeDB" id="P50535"/>
<dbReference type="Reactome" id="R-DME-3214847">
    <property type="pathway name" value="HATs acetylate histones"/>
</dbReference>
<dbReference type="BioGRID-ORCS" id="35121">
    <property type="hits" value="0 hits in 1 CRISPR screen"/>
</dbReference>
<dbReference type="GenomeRNAi" id="35121"/>
<dbReference type="PRO" id="PR:P50535"/>
<dbReference type="Proteomes" id="UP000000803">
    <property type="component" value="Chromosome 2L"/>
</dbReference>
<dbReference type="Bgee" id="FBgn0005617">
    <property type="expression patterns" value="Expressed in spermatogonium in testis and 190 other cell types or tissues"/>
</dbReference>
<dbReference type="ExpressionAtlas" id="P50535">
    <property type="expression patterns" value="baseline and differential"/>
</dbReference>
<dbReference type="GO" id="GO:0005694">
    <property type="term" value="C:chromosome"/>
    <property type="evidence" value="ECO:0000314"/>
    <property type="project" value="FlyBase"/>
</dbReference>
<dbReference type="GO" id="GO:0046536">
    <property type="term" value="C:dosage compensation complex"/>
    <property type="evidence" value="ECO:0000314"/>
    <property type="project" value="FlyBase"/>
</dbReference>
<dbReference type="GO" id="GO:0072487">
    <property type="term" value="C:MSL complex"/>
    <property type="evidence" value="ECO:0000314"/>
    <property type="project" value="UniProtKB"/>
</dbReference>
<dbReference type="GO" id="GO:0000228">
    <property type="term" value="C:nuclear chromosome"/>
    <property type="evidence" value="ECO:0000314"/>
    <property type="project" value="FlyBase"/>
</dbReference>
<dbReference type="GO" id="GO:0000805">
    <property type="term" value="C:X chromosome"/>
    <property type="evidence" value="ECO:0000314"/>
    <property type="project" value="UniProtKB"/>
</dbReference>
<dbReference type="GO" id="GO:0016456">
    <property type="term" value="C:X chromosome located dosage compensation complex, transcription activating"/>
    <property type="evidence" value="ECO:0000314"/>
    <property type="project" value="UniProtKB"/>
</dbReference>
<dbReference type="GO" id="GO:0003682">
    <property type="term" value="F:chromatin binding"/>
    <property type="evidence" value="ECO:0000314"/>
    <property type="project" value="FlyBase"/>
</dbReference>
<dbReference type="GO" id="GO:0003677">
    <property type="term" value="F:DNA binding"/>
    <property type="evidence" value="ECO:0000314"/>
    <property type="project" value="FlyBase"/>
</dbReference>
<dbReference type="GO" id="GO:0030674">
    <property type="term" value="F:protein-macromolecule adaptor activity"/>
    <property type="evidence" value="ECO:0000250"/>
    <property type="project" value="UniProt"/>
</dbReference>
<dbReference type="GO" id="GO:0000976">
    <property type="term" value="F:transcription cis-regulatory region binding"/>
    <property type="evidence" value="ECO:0000314"/>
    <property type="project" value="FlyBase"/>
</dbReference>
<dbReference type="GO" id="GO:0006325">
    <property type="term" value="P:chromatin organization"/>
    <property type="evidence" value="ECO:0000315"/>
    <property type="project" value="FlyBase"/>
</dbReference>
<dbReference type="GO" id="GO:0009047">
    <property type="term" value="P:dosage compensation by hyperactivation of X chromosome"/>
    <property type="evidence" value="ECO:0000314"/>
    <property type="project" value="UniProt"/>
</dbReference>
<dbReference type="GO" id="GO:0007549">
    <property type="term" value="P:sex-chromosome dosage compensation"/>
    <property type="evidence" value="ECO:0000315"/>
    <property type="project" value="FlyBase"/>
</dbReference>
<dbReference type="Gene3D" id="6.10.250.3170">
    <property type="match status" value="1"/>
</dbReference>
<dbReference type="InterPro" id="IPR026711">
    <property type="entry name" value="Msl-1"/>
</dbReference>
<dbReference type="InterPro" id="IPR029332">
    <property type="entry name" value="PEHE_dom"/>
</dbReference>
<dbReference type="PANTHER" id="PTHR21656:SF2">
    <property type="entry name" value="MALE-SPECIFIC LETHAL 1 HOMOLOG"/>
    <property type="match status" value="1"/>
</dbReference>
<dbReference type="PANTHER" id="PTHR21656">
    <property type="entry name" value="MALE-SPECIFIC LETHAL-1 PROTEIN"/>
    <property type="match status" value="1"/>
</dbReference>
<dbReference type="Pfam" id="PF15275">
    <property type="entry name" value="PEHE"/>
    <property type="match status" value="1"/>
</dbReference>
<dbReference type="SMART" id="SM01300">
    <property type="entry name" value="PEHE"/>
    <property type="match status" value="1"/>
</dbReference>
<dbReference type="PROSITE" id="PS52052">
    <property type="entry name" value="PEHE"/>
    <property type="match status" value="1"/>
</dbReference>
<feature type="chain" id="PRO_0000096597" description="Protein male-specific lethal-1">
    <location>
        <begin position="1"/>
        <end position="1039"/>
    </location>
</feature>
<feature type="domain" description="PEHE" evidence="1">
    <location>
        <begin position="865"/>
        <end position="983"/>
    </location>
</feature>
<feature type="region of interest" description="Disordered" evidence="2">
    <location>
        <begin position="1"/>
        <end position="44"/>
    </location>
</feature>
<feature type="region of interest" description="Disordered" evidence="2">
    <location>
        <begin position="171"/>
        <end position="199"/>
    </location>
</feature>
<feature type="region of interest" description="Disordered" evidence="2">
    <location>
        <begin position="244"/>
        <end position="266"/>
    </location>
</feature>
<feature type="region of interest" description="Disordered" evidence="2">
    <location>
        <begin position="358"/>
        <end position="454"/>
    </location>
</feature>
<feature type="region of interest" description="Disordered" evidence="2">
    <location>
        <begin position="485"/>
        <end position="691"/>
    </location>
</feature>
<feature type="region of interest" description="Disordered" evidence="2">
    <location>
        <begin position="729"/>
        <end position="799"/>
    </location>
</feature>
<feature type="region of interest" description="Interaction with mof HAT domain" evidence="1">
    <location>
        <begin position="886"/>
        <end position="904"/>
    </location>
</feature>
<feature type="region of interest" description="Disordered" evidence="2">
    <location>
        <begin position="1011"/>
        <end position="1039"/>
    </location>
</feature>
<feature type="short sequence motif" description="Nuclear localization signal">
    <location>
        <begin position="1032"/>
        <end position="1037"/>
    </location>
</feature>
<feature type="compositionally biased region" description="Basic residues" evidence="2">
    <location>
        <begin position="1"/>
        <end position="13"/>
    </location>
</feature>
<feature type="compositionally biased region" description="Basic and acidic residues" evidence="2">
    <location>
        <begin position="255"/>
        <end position="266"/>
    </location>
</feature>
<feature type="compositionally biased region" description="Acidic residues" evidence="2">
    <location>
        <begin position="368"/>
        <end position="392"/>
    </location>
</feature>
<feature type="compositionally biased region" description="Basic and acidic residues" evidence="2">
    <location>
        <begin position="397"/>
        <end position="407"/>
    </location>
</feature>
<feature type="compositionally biased region" description="Polar residues" evidence="2">
    <location>
        <begin position="431"/>
        <end position="445"/>
    </location>
</feature>
<feature type="compositionally biased region" description="Basic and acidic residues" evidence="2">
    <location>
        <begin position="504"/>
        <end position="515"/>
    </location>
</feature>
<feature type="compositionally biased region" description="Basic and acidic residues" evidence="2">
    <location>
        <begin position="523"/>
        <end position="570"/>
    </location>
</feature>
<feature type="compositionally biased region" description="Polar residues" evidence="2">
    <location>
        <begin position="581"/>
        <end position="592"/>
    </location>
</feature>
<feature type="compositionally biased region" description="Polar residues" evidence="2">
    <location>
        <begin position="609"/>
        <end position="625"/>
    </location>
</feature>
<feature type="compositionally biased region" description="Polar residues" evidence="2">
    <location>
        <begin position="759"/>
        <end position="768"/>
    </location>
</feature>
<feature type="compositionally biased region" description="Basic residues" evidence="2">
    <location>
        <begin position="1030"/>
        <end position="1039"/>
    </location>
</feature>
<feature type="modified residue" description="Phosphoserine" evidence="16">
    <location>
        <position position="18"/>
    </location>
</feature>
<feature type="modified residue" description="Phosphoserine" evidence="16">
    <location>
        <position position="238"/>
    </location>
</feature>
<feature type="modified residue" description="Phosphoserine" evidence="16">
    <location>
        <position position="433"/>
    </location>
</feature>
<feature type="modified residue" description="Phosphothreonine" evidence="16">
    <location>
        <position position="434"/>
    </location>
</feature>
<feature type="modified residue" description="Phosphoserine" evidence="16">
    <location>
        <position position="492"/>
    </location>
</feature>
<feature type="modified residue" description="Phosphoserine" evidence="16">
    <location>
        <position position="496"/>
    </location>
</feature>
<feature type="modified residue" description="Phosphoserine" evidence="16">
    <location>
        <position position="585"/>
    </location>
</feature>
<feature type="modified residue" description="Phosphothreonine" evidence="16">
    <location>
        <position position="659"/>
    </location>
</feature>
<feature type="modified residue" description="Phosphoserine" evidence="16">
    <location>
        <position position="682"/>
    </location>
</feature>
<feature type="modified residue" description="Phosphoserine" evidence="16">
    <location>
        <position position="684"/>
    </location>
</feature>
<feature type="modified residue" description="Phosphothreonine" evidence="16">
    <location>
        <position position="747"/>
    </location>
</feature>
<feature type="modified residue" description="Phosphoserine" evidence="16">
    <location>
        <position position="749"/>
    </location>
</feature>
<feature type="modified residue" description="Phosphothreonine" evidence="16">
    <location>
        <position position="750"/>
    </location>
</feature>
<feature type="modified residue" description="Phosphothreonine" evidence="16">
    <location>
        <position position="751"/>
    </location>
</feature>
<feature type="modified residue" description="Phosphothreonine" evidence="16">
    <location>
        <position position="753"/>
    </location>
</feature>
<feature type="modified residue" description="Phosphoserine" evidence="16">
    <location>
        <position position="764"/>
    </location>
</feature>
<feature type="modified residue" description="Phosphoserine" evidence="16">
    <location>
        <position position="765"/>
    </location>
</feature>
<feature type="modified residue" description="Phosphothreonine" evidence="16">
    <location>
        <position position="788"/>
    </location>
</feature>
<feature type="modified residue" description="Phosphoserine" evidence="16">
    <location>
        <position position="810"/>
    </location>
</feature>
<feature type="modified residue" description="Phosphothreonine" evidence="16">
    <location>
        <position position="813"/>
    </location>
</feature>
<feature type="modified residue" description="Phosphothreonine" evidence="16">
    <location>
        <position position="832"/>
    </location>
</feature>
<feature type="modified residue" description="Phosphoserine" evidence="16">
    <location>
        <position position="879"/>
    </location>
</feature>
<feature type="modified residue" description="Phosphoserine" evidence="16">
    <location>
        <position position="889"/>
    </location>
</feature>
<feature type="modified residue" description="Phosphothreonine" evidence="16">
    <location>
        <position position="1014"/>
    </location>
</feature>
<feature type="modified residue" description="Phosphoserine" evidence="16">
    <location>
        <position position="1025"/>
    </location>
</feature>
<feature type="mutagenesis site" description="Decreased ability to promote phosphorylation of 'Ser-5' of the C-terminal heptapeptide repeat domain (CTD) of the largest RNA polymerase II subunit Polr2A. Does not affect dosage compensation in males." evidence="12">
    <original>S</original>
    <variation>A</variation>
    <location>
        <position position="18"/>
    </location>
</feature>
<feature type="mutagenesis site" description="Decreased ability to promote phosphorylation of 'Ser-5' of the C-terminal heptapeptide repeat domain (CTD) of the largest RNA polymerase II subunit Polr2A. Does not affect dosage compensation in males." evidence="12">
    <original>TPAPTPSTT</original>
    <variation>APAPAPSTA</variation>
    <location>
        <begin position="743"/>
        <end position="751"/>
    </location>
</feature>
<feature type="sequence conflict" description="In Ref. 1; AAA98918." evidence="15" ref="1">
    <original>R</original>
    <variation>G</variation>
    <location>
        <position position="26"/>
    </location>
</feature>
<feature type="sequence conflict" description="In Ref. 1; AAA98918." evidence="15" ref="1">
    <original>S</original>
    <variation>L</variation>
    <location>
        <position position="492"/>
    </location>
</feature>
<feature type="sequence conflict" description="In Ref. 1; AAA98918." evidence="15" ref="1">
    <original>M</original>
    <variation>I</variation>
    <location>
        <position position="670"/>
    </location>
</feature>
<sequence length="1039" mass="117503">MDKRFKWPPKKRANYLESPYPHIPSRGRQRNLHGHPNQTQHLHQHPGKIYERQQYGNGRGGHGGGNNNYRKLLHSLPAEHGGGAMAPPSSGGTVCAGADMVKLISENNNLRRMVMLNLNLMQEQTDSIAAKDKELDDQSAKMSVVKAQNEELKQAVAQLEAANQELCKQLRRKNQRRNDNDDDDDDPPLPPAAPQQKLIRCHAETQTVFREREQGTQTIDAQPQFANALPRGINMKESPALDHHAGAVTNQPASKRSESKGRGEFNGKKVSTFILQRMNQDFEHHIHEQTEVAEEHEMEAHKEQISQEEDQLVAEEDHLHMQEVHTEEVVGGDIFHDALESIEMEVVTEELVDMEEHGQSVDANGHIEEDDDEDDEDDENSDKDDDSEEDDYPWMHSDADVNARTEEELWQNQNYLLELDPTEEKTCAPSAHSTPNHQQKSSTQAEIRKEGNQNRITEKLLQLKPEPMVDALEAPILPKWVAFKKKDKEHESVPESPEVPKQQPHQEDAIVDHNAIKNQLEVPKPDLKPKDQPKDEQRQDGQLDVRVEPQEDVRKVQKETLKRQPEDAPKHLPKAVAPKVTKTSSRESTLPKANTADIKDAPAQKVIANHQSTKTQTDPVKTQRLQVKIRQYEMHPDMRTGSSAPSDIRKQKNVDPVSTPETKTIKSKSMLVNDKKTTSETSQSPDQEIDVETVRRKLAEHLKKELLSQSHSSQVTLKKIRERVATNLIYPPPSAPVSSTTITPAPTPSTTPTPGSTPQHAVTSSMDQEISAAKSKSKAAEQIATPLTPQSNSSVSSTTSTIRKTLNNCSPHTYSKATARSGKLQSRFRTATFPYSTRTWEDQEFHCDNEFFLEEADELLADNPSLEIPKWRDVPVPPSSDKIDTELLSDATFERRHQKYVKDEVDRKCRDARYMKEQIRLEQLRMRRNQDEVLVALDPLRASTFYPLPEDIEAIQFVNEVTVQAFGENVVNMEARDDFGVPWVDAIEAPTSIARSKALAEPVATLASKKIPTTAAEARHQENHSSYVFPKRRKRQKNR</sequence>
<organism>
    <name type="scientific">Drosophila melanogaster</name>
    <name type="common">Fruit fly</name>
    <dbReference type="NCBI Taxonomy" id="7227"/>
    <lineage>
        <taxon>Eukaryota</taxon>
        <taxon>Metazoa</taxon>
        <taxon>Ecdysozoa</taxon>
        <taxon>Arthropoda</taxon>
        <taxon>Hexapoda</taxon>
        <taxon>Insecta</taxon>
        <taxon>Pterygota</taxon>
        <taxon>Neoptera</taxon>
        <taxon>Endopterygota</taxon>
        <taxon>Diptera</taxon>
        <taxon>Brachycera</taxon>
        <taxon>Muscomorpha</taxon>
        <taxon>Ephydroidea</taxon>
        <taxon>Drosophilidae</taxon>
        <taxon>Drosophila</taxon>
        <taxon>Sophophora</taxon>
    </lineage>
</organism>
<evidence type="ECO:0000255" key="1">
    <source>
        <dbReference type="PROSITE-ProRule" id="PRU01397"/>
    </source>
</evidence>
<evidence type="ECO:0000256" key="2">
    <source>
        <dbReference type="SAM" id="MobiDB-lite"/>
    </source>
</evidence>
<evidence type="ECO:0000269" key="3">
    <source>
    </source>
</evidence>
<evidence type="ECO:0000269" key="4">
    <source>
    </source>
</evidence>
<evidence type="ECO:0000269" key="5">
    <source>
    </source>
</evidence>
<evidence type="ECO:0000269" key="6">
    <source>
    </source>
</evidence>
<evidence type="ECO:0000269" key="7">
    <source>
    </source>
</evidence>
<evidence type="ECO:0000269" key="8">
    <source>
    </source>
</evidence>
<evidence type="ECO:0000269" key="9">
    <source>
    </source>
</evidence>
<evidence type="ECO:0000269" key="10">
    <source>
    </source>
</evidence>
<evidence type="ECO:0000269" key="11">
    <source>
    </source>
</evidence>
<evidence type="ECO:0000269" key="12">
    <source>
    </source>
</evidence>
<evidence type="ECO:0000269" key="13">
    <source>
    </source>
</evidence>
<evidence type="ECO:0000303" key="14">
    <source>
    </source>
</evidence>
<evidence type="ECO:0000305" key="15"/>
<evidence type="ECO:0000305" key="16">
    <source>
    </source>
</evidence>
<evidence type="ECO:0000312" key="17">
    <source>
        <dbReference type="FlyBase" id="FBgn0005617"/>
    </source>
</evidence>
<comment type="function">
    <text evidence="6 7 8 10 13">Component of the male-specific lethal (MSL) histone acetyltransferase complex, a multiprotein complex essential for elevating transcription of the single X chromosome in the male (X chromosome dosage compensation) (PubMed:21726816, PubMed:7781064). The MSL complex specifically associates with the single X chromosome in males and mediates formation of H4K16ac, promoting a two-fold activation of X chromosome (PubMed:16543150, PubMed:18510926). In complex with msl-2, promotes ubiquitination of histone H2B (PubMed:21726816). In addition to its role in dosage compensation in males, regulates the activity of gene promoters: acts together with Cdk7 to promote phosphorylation of 'Ser-5' of the C-terminal heptapeptide repeat domain (CTD) of the largest RNA polymerase II subunit Polr2A (PubMed:27183194).</text>
</comment>
<comment type="subunit">
    <text evidence="1 3 4 5 6 7 11">Component of the male-specific lethal (MSL) histone acetyltransferase complex, composed of mof, mle, msl-1, msl-2 and msl-3 proteins, as well as roX1 and roX2 non-coding RNAs (PubMed:10679323, PubMed:11014199, PubMed:16543150, PubMed:18510926). Interacts (via PEHE domain) with mof (via HAT domain) and msl-3 (via MRG domain); both interactions are direct. Interacts with tamo via the nuclear localization signal (PubMed:12653959). Component of a maternal MSL subcomplex composed of mof, msl-1 and msl-3 (PubMed:32502394).</text>
</comment>
<comment type="subcellular location">
    <subcellularLocation>
        <location evidence="6">Nucleus</location>
    </subcellularLocation>
    <subcellularLocation>
        <location evidence="4 6 7">Chromosome</location>
    </subcellularLocation>
    <text evidence="4 6 7">Msl-1 is associated with hundreds of discrete sites along the length of the X chromosome in males and not in females, and is also associated with 10-20 autosomal sites in males.</text>
</comment>
<comment type="PTM">
    <text evidence="10 12">Phosphorylation at Ser-18, Thr743, Thr-747 and Thr-751 is required to promote phosphorylation of 'Ser-5' of the C-terminal heptapeptide repeat domain (CTD) of the largest RNA polymerase II subunit Polr2A (PubMed:27183194). Phosphorylated by Cdk7 in vitro (PubMed:27183194). In contrast, phosphorylation at Ser-18, Thr743, Thr-747 and Thr-751 does not affect its role in dosage compensation in males (PubMed:34426916).</text>
</comment>
<comment type="PTM">
    <text evidence="9">Ubiquitinated by msl-2.</text>
</comment>
<comment type="similarity">
    <text evidence="15">Belongs to the msl-1 family.</text>
</comment>
<keyword id="KW-0158">Chromosome</keyword>
<keyword id="KW-0539">Nucleus</keyword>
<keyword id="KW-0597">Phosphoprotein</keyword>
<keyword id="KW-1185">Reference proteome</keyword>
<keyword id="KW-0832">Ubl conjugation</keyword>
<reference key="1">
    <citation type="journal article" date="1995" name="Cell">
        <title>Expression of msl-2 causes assembly of dosage compensation regulators on the X chromosomes and female lethality in Drosophila.</title>
        <authorList>
            <person name="Kelley R.L."/>
            <person name="Solovyeva I."/>
            <person name="Lyman L.M."/>
            <person name="Richman R."/>
            <person name="Solovyev V."/>
            <person name="Kuroda M.I."/>
        </authorList>
    </citation>
    <scope>NUCLEOTIDE SEQUENCE [GENOMIC DNA]</scope>
    <scope>FUNCTION</scope>
</reference>
<reference key="2">
    <citation type="journal article" date="2000" name="Science">
        <title>The genome sequence of Drosophila melanogaster.</title>
        <authorList>
            <person name="Adams M.D."/>
            <person name="Celniker S.E."/>
            <person name="Holt R.A."/>
            <person name="Evans C.A."/>
            <person name="Gocayne J.D."/>
            <person name="Amanatides P.G."/>
            <person name="Scherer S.E."/>
            <person name="Li P.W."/>
            <person name="Hoskins R.A."/>
            <person name="Galle R.F."/>
            <person name="George R.A."/>
            <person name="Lewis S.E."/>
            <person name="Richards S."/>
            <person name="Ashburner M."/>
            <person name="Henderson S.N."/>
            <person name="Sutton G.G."/>
            <person name="Wortman J.R."/>
            <person name="Yandell M.D."/>
            <person name="Zhang Q."/>
            <person name="Chen L.X."/>
            <person name="Brandon R.C."/>
            <person name="Rogers Y.-H.C."/>
            <person name="Blazej R.G."/>
            <person name="Champe M."/>
            <person name="Pfeiffer B.D."/>
            <person name="Wan K.H."/>
            <person name="Doyle C."/>
            <person name="Baxter E.G."/>
            <person name="Helt G."/>
            <person name="Nelson C.R."/>
            <person name="Miklos G.L.G."/>
            <person name="Abril J.F."/>
            <person name="Agbayani A."/>
            <person name="An H.-J."/>
            <person name="Andrews-Pfannkoch C."/>
            <person name="Baldwin D."/>
            <person name="Ballew R.M."/>
            <person name="Basu A."/>
            <person name="Baxendale J."/>
            <person name="Bayraktaroglu L."/>
            <person name="Beasley E.M."/>
            <person name="Beeson K.Y."/>
            <person name="Benos P.V."/>
            <person name="Berman B.P."/>
            <person name="Bhandari D."/>
            <person name="Bolshakov S."/>
            <person name="Borkova D."/>
            <person name="Botchan M.R."/>
            <person name="Bouck J."/>
            <person name="Brokstein P."/>
            <person name="Brottier P."/>
            <person name="Burtis K.C."/>
            <person name="Busam D.A."/>
            <person name="Butler H."/>
            <person name="Cadieu E."/>
            <person name="Center A."/>
            <person name="Chandra I."/>
            <person name="Cherry J.M."/>
            <person name="Cawley S."/>
            <person name="Dahlke C."/>
            <person name="Davenport L.B."/>
            <person name="Davies P."/>
            <person name="de Pablos B."/>
            <person name="Delcher A."/>
            <person name="Deng Z."/>
            <person name="Mays A.D."/>
            <person name="Dew I."/>
            <person name="Dietz S.M."/>
            <person name="Dodson K."/>
            <person name="Doup L.E."/>
            <person name="Downes M."/>
            <person name="Dugan-Rocha S."/>
            <person name="Dunkov B.C."/>
            <person name="Dunn P."/>
            <person name="Durbin K.J."/>
            <person name="Evangelista C.C."/>
            <person name="Ferraz C."/>
            <person name="Ferriera S."/>
            <person name="Fleischmann W."/>
            <person name="Fosler C."/>
            <person name="Gabrielian A.E."/>
            <person name="Garg N.S."/>
            <person name="Gelbart W.M."/>
            <person name="Glasser K."/>
            <person name="Glodek A."/>
            <person name="Gong F."/>
            <person name="Gorrell J.H."/>
            <person name="Gu Z."/>
            <person name="Guan P."/>
            <person name="Harris M."/>
            <person name="Harris N.L."/>
            <person name="Harvey D.A."/>
            <person name="Heiman T.J."/>
            <person name="Hernandez J.R."/>
            <person name="Houck J."/>
            <person name="Hostin D."/>
            <person name="Houston K.A."/>
            <person name="Howland T.J."/>
            <person name="Wei M.-H."/>
            <person name="Ibegwam C."/>
            <person name="Jalali M."/>
            <person name="Kalush F."/>
            <person name="Karpen G.H."/>
            <person name="Ke Z."/>
            <person name="Kennison J.A."/>
            <person name="Ketchum K.A."/>
            <person name="Kimmel B.E."/>
            <person name="Kodira C.D."/>
            <person name="Kraft C.L."/>
            <person name="Kravitz S."/>
            <person name="Kulp D."/>
            <person name="Lai Z."/>
            <person name="Lasko P."/>
            <person name="Lei Y."/>
            <person name="Levitsky A.A."/>
            <person name="Li J.H."/>
            <person name="Li Z."/>
            <person name="Liang Y."/>
            <person name="Lin X."/>
            <person name="Liu X."/>
            <person name="Mattei B."/>
            <person name="McIntosh T.C."/>
            <person name="McLeod M.P."/>
            <person name="McPherson D."/>
            <person name="Merkulov G."/>
            <person name="Milshina N.V."/>
            <person name="Mobarry C."/>
            <person name="Morris J."/>
            <person name="Moshrefi A."/>
            <person name="Mount S.M."/>
            <person name="Moy M."/>
            <person name="Murphy B."/>
            <person name="Murphy L."/>
            <person name="Muzny D.M."/>
            <person name="Nelson D.L."/>
            <person name="Nelson D.R."/>
            <person name="Nelson K.A."/>
            <person name="Nixon K."/>
            <person name="Nusskern D.R."/>
            <person name="Pacleb J.M."/>
            <person name="Palazzolo M."/>
            <person name="Pittman G.S."/>
            <person name="Pan S."/>
            <person name="Pollard J."/>
            <person name="Puri V."/>
            <person name="Reese M.G."/>
            <person name="Reinert K."/>
            <person name="Remington K."/>
            <person name="Saunders R.D.C."/>
            <person name="Scheeler F."/>
            <person name="Shen H."/>
            <person name="Shue B.C."/>
            <person name="Siden-Kiamos I."/>
            <person name="Simpson M."/>
            <person name="Skupski M.P."/>
            <person name="Smith T.J."/>
            <person name="Spier E."/>
            <person name="Spradling A.C."/>
            <person name="Stapleton M."/>
            <person name="Strong R."/>
            <person name="Sun E."/>
            <person name="Svirskas R."/>
            <person name="Tector C."/>
            <person name="Turner R."/>
            <person name="Venter E."/>
            <person name="Wang A.H."/>
            <person name="Wang X."/>
            <person name="Wang Z.-Y."/>
            <person name="Wassarman D.A."/>
            <person name="Weinstock G.M."/>
            <person name="Weissenbach J."/>
            <person name="Williams S.M."/>
            <person name="Woodage T."/>
            <person name="Worley K.C."/>
            <person name="Wu D."/>
            <person name="Yang S."/>
            <person name="Yao Q.A."/>
            <person name="Ye J."/>
            <person name="Yeh R.-F."/>
            <person name="Zaveri J.S."/>
            <person name="Zhan M."/>
            <person name="Zhang G."/>
            <person name="Zhao Q."/>
            <person name="Zheng L."/>
            <person name="Zheng X.H."/>
            <person name="Zhong F.N."/>
            <person name="Zhong W."/>
            <person name="Zhou X."/>
            <person name="Zhu S.C."/>
            <person name="Zhu X."/>
            <person name="Smith H.O."/>
            <person name="Gibbs R.A."/>
            <person name="Myers E.W."/>
            <person name="Rubin G.M."/>
            <person name="Venter J.C."/>
        </authorList>
    </citation>
    <scope>NUCLEOTIDE SEQUENCE [LARGE SCALE GENOMIC DNA]</scope>
    <source>
        <strain>Berkeley</strain>
    </source>
</reference>
<reference key="3">
    <citation type="journal article" date="2002" name="Genome Biol.">
        <title>Annotation of the Drosophila melanogaster euchromatic genome: a systematic review.</title>
        <authorList>
            <person name="Misra S."/>
            <person name="Crosby M.A."/>
            <person name="Mungall C.J."/>
            <person name="Matthews B.B."/>
            <person name="Campbell K.S."/>
            <person name="Hradecky P."/>
            <person name="Huang Y."/>
            <person name="Kaminker J.S."/>
            <person name="Millburn G.H."/>
            <person name="Prochnik S.E."/>
            <person name="Smith C.D."/>
            <person name="Tupy J.L."/>
            <person name="Whitfield E.J."/>
            <person name="Bayraktaroglu L."/>
            <person name="Berman B.P."/>
            <person name="Bettencourt B.R."/>
            <person name="Celniker S.E."/>
            <person name="de Grey A.D.N.J."/>
            <person name="Drysdale R.A."/>
            <person name="Harris N.L."/>
            <person name="Richter J."/>
            <person name="Russo S."/>
            <person name="Schroeder A.J."/>
            <person name="Shu S.Q."/>
            <person name="Stapleton M."/>
            <person name="Yamada C."/>
            <person name="Ashburner M."/>
            <person name="Gelbart W.M."/>
            <person name="Rubin G.M."/>
            <person name="Lewis S.E."/>
        </authorList>
    </citation>
    <scope>GENOME REANNOTATION</scope>
    <source>
        <strain>Berkeley</strain>
    </source>
</reference>
<reference key="4">
    <citation type="submission" date="2005-08" db="EMBL/GenBank/DDBJ databases">
        <authorList>
            <person name="Stapleton M."/>
            <person name="Carlson J.W."/>
            <person name="Chavez C."/>
            <person name="Frise E."/>
            <person name="George R.A."/>
            <person name="Pacleb J.M."/>
            <person name="Park S."/>
            <person name="Wan K.H."/>
            <person name="Yu C."/>
            <person name="Celniker S.E."/>
        </authorList>
    </citation>
    <scope>NUCLEOTIDE SEQUENCE [LARGE SCALE MRNA]</scope>
    <source>
        <strain>Berkeley</strain>
        <tissue>Embryo</tissue>
    </source>
</reference>
<reference key="5">
    <citation type="journal article" date="1993" name="Genetics">
        <title>The male-specific lethal-one (msl-1) gene of Drosophila melanogaster encodes a novel protein that associates with the X chromosome in males.</title>
        <authorList>
            <person name="Palmer M.J."/>
            <person name="Mergner V.A."/>
            <person name="Richman R."/>
            <person name="Manning J.E."/>
            <person name="Kuroda M.I."/>
            <person name="Lucchesi J.C."/>
        </authorList>
    </citation>
    <scope>NUCLEOTIDE SEQUENCE [GENOMIC DNA] OF 85-1039</scope>
    <source>
        <strain>Canton-S</strain>
    </source>
</reference>
<reference key="6">
    <citation type="journal article" date="2000" name="Curr. Biol.">
        <title>Ordered assembly of roX RNAs into MSL complexes on the dosage-compensated X chromosome in Drosophila.</title>
        <authorList>
            <person name="Meller V.H."/>
            <person name="Gordadze P.R."/>
            <person name="Park Y."/>
            <person name="Chu X."/>
            <person name="Stuckenholz C."/>
            <person name="Kelley R.L."/>
            <person name="Kuroda M.I."/>
        </authorList>
    </citation>
    <scope>IDENTIFICATION IN THE MSL COMPLEX</scope>
</reference>
<reference key="7">
    <citation type="journal article" date="2000" name="Nature">
        <title>Chromodomains are protein-RNA interaction modules.</title>
        <authorList>
            <person name="Akhtar A."/>
            <person name="Zink D."/>
            <person name="Becker P.B."/>
        </authorList>
    </citation>
    <scope>IDENTIFICATION IN THE MSL COMPLEX</scope>
    <scope>SUBCELLULAR LOCATION</scope>
</reference>
<reference key="8">
    <citation type="journal article" date="2003" name="Genes Cells">
        <title>Tamo selectively modulates nuclear import in Drosophila.</title>
        <authorList>
            <person name="Minakhina S."/>
            <person name="Yang J."/>
            <person name="Steward R."/>
        </authorList>
    </citation>
    <scope>INTERACTION WITH TAMO</scope>
</reference>
<reference key="9">
    <citation type="journal article" date="2006" name="Mol. Cell">
        <title>Nuclear pore components are involved in the transcriptional regulation of dosage compensation in Drosophila.</title>
        <authorList>
            <person name="Mendjan S."/>
            <person name="Taipale M."/>
            <person name="Kind J."/>
            <person name="Holz H."/>
            <person name="Gebhardt P."/>
            <person name="Schelder M."/>
            <person name="Vermeulen M."/>
            <person name="Buscaino A."/>
            <person name="Duncan K."/>
            <person name="Mueller J."/>
            <person name="Wilm M."/>
            <person name="Stunnenberg H.G."/>
            <person name="Saumweber H."/>
            <person name="Akhtar A."/>
        </authorList>
    </citation>
    <scope>FUNCTION</scope>
    <scope>IDENTIFICATION IN THE MSL COMPLEX</scope>
    <scope>SUBCELLULAR LOCATION</scope>
</reference>
<reference key="10">
    <citation type="journal article" date="2008" name="Cell">
        <title>Genome-wide analysis reveals MOF as a key regulator of dosage compensation and gene expression in Drosophila.</title>
        <authorList>
            <person name="Kind J."/>
            <person name="Vaquerizas J.M."/>
            <person name="Gebhardt P."/>
            <person name="Gentzel M."/>
            <person name="Luscombe N.M."/>
            <person name="Bertone P."/>
            <person name="Akhtar A."/>
        </authorList>
    </citation>
    <scope>FUNCTION</scope>
    <scope>IDENTIFICATION IN THE MSL COMPLEX</scope>
    <scope>SUBCELLULAR LOCATION</scope>
</reference>
<reference key="11">
    <citation type="journal article" date="2011" name="Mol. Cell">
        <title>The RING finger protein MSL2 in the MOF complex is an E3 ubiquitin ligase for H2B K34 and is involved in crosstalk with H3 K4 and K79 methylation.</title>
        <authorList>
            <person name="Wu L."/>
            <person name="Zee B.M."/>
            <person name="Wang Y."/>
            <person name="Garcia B.A."/>
            <person name="Dou Y."/>
        </authorList>
    </citation>
    <scope>FUNCTION IN E3 UBIQUITIN LIGASE COMPLEX</scope>
</reference>
<reference key="12">
    <citation type="journal article" date="2012" name="Mol. Cell">
        <title>MSL2 combines sensor and effector functions in homeostatic control of the Drosophila dosage compensation machinery.</title>
        <authorList>
            <person name="Villa R."/>
            <person name="Forne I."/>
            <person name="Mueller M."/>
            <person name="Imhof A."/>
            <person name="Straub T."/>
            <person name="Becker P.B."/>
        </authorList>
    </citation>
    <scope>UBIQUITINATION</scope>
</reference>
<reference key="13">
    <citation type="journal article" date="2016" name="Nat. Struct. Mol. Biol.">
        <title>Functional interplay between MSL1 and CDK7 controls RNA polymerase II Ser5 phosphorylation.</title>
        <authorList>
            <person name="Chlamydas S."/>
            <person name="Holz H."/>
            <person name="Samata M."/>
            <person name="Chelmicki T."/>
            <person name="Georgiev P."/>
            <person name="Pelechano V."/>
            <person name="Duendar F."/>
            <person name="Dasmeh P."/>
            <person name="Mittler G."/>
            <person name="Cadete F.T."/>
            <person name="Ramirez F."/>
            <person name="Conrad T."/>
            <person name="Wei W."/>
            <person name="Raja S."/>
            <person name="Manke T."/>
            <person name="Luscombe N.M."/>
            <person name="Steinmetz L.M."/>
            <person name="Akhtar A."/>
        </authorList>
    </citation>
    <scope>FUNCTION</scope>
    <scope>PHOSPHORYLATION AT SER-18; SER-238; SER-433; THR-434; SER-492; SER-496; SER-585; THR-659; SER-682; SER-684; THR-747; SER-749; THR-750; THR-751; THR-753; SER-764; SER-765; THR-788; SER-810; THR-813; THR-832; SER-879; SER-889; THR-1014 AND SER-1025</scope>
    <scope>MUTAGENESIS OF SER-18 AND 743-THR--THR-751</scope>
</reference>
<reference key="14">
    <citation type="journal article" date="2020" name="Cell">
        <title>Intergenerationally maintained histone H4 lysine 16 acetylation is instructive for future gene activation.</title>
        <authorList>
            <person name="Samata M."/>
            <person name="Alexiadis A."/>
            <person name="Richard G."/>
            <person name="Georgiev P."/>
            <person name="Nuebler J."/>
            <person name="Kulkarni T."/>
            <person name="Renschler G."/>
            <person name="Basilicata M.F."/>
            <person name="Zenk F.L."/>
            <person name="Shvedunova M."/>
            <person name="Semplicio G."/>
            <person name="Mirny L."/>
            <person name="Iovino N."/>
            <person name="Akhtar A."/>
        </authorList>
    </citation>
    <scope>IDENTIFICATION IN THE MSL SUBCOMPLEX</scope>
</reference>
<reference key="15">
    <citation type="journal article" date="2021" name="Dokl. Biochem. Biophys.">
        <title>Mutations of phosphorylation sites in MSL1 protein do not affect dosage compensation in Drosophila melanogaster.</title>
        <authorList>
            <person name="Babosha V.A."/>
            <person name="Georgiev P.G."/>
            <person name="Maksimenko O.G."/>
        </authorList>
    </citation>
    <scope>MUTAGENESIS OF SER-18 AND 743-THR--THR-751</scope>
</reference>
<gene>
    <name evidence="14 17" type="primary">msl-1</name>
    <name evidence="17" type="ORF">CG10385</name>
</gene>
<accession>P50535</accession>
<accession>Q3ZAP1</accession>
<accession>Q9VJ66</accession>